<name>CRYGS_RABIT</name>
<comment type="function">
    <text evidence="1">Crystallins are the dominant structural components of the vertebrate eye lens.</text>
</comment>
<comment type="subunit">
    <text evidence="1">Monomer.</text>
</comment>
<comment type="domain">
    <text>Has a two-domain beta-structure, folded into four very similar Greek key motifs.</text>
</comment>
<comment type="similarity">
    <text evidence="4">Belongs to the beta/gamma-crystallin family.</text>
</comment>
<accession>A4L9I8</accession>
<evidence type="ECO:0000250" key="1"/>
<evidence type="ECO:0000250" key="2">
    <source>
        <dbReference type="UniProtKB" id="P22914"/>
    </source>
</evidence>
<evidence type="ECO:0000255" key="3">
    <source>
        <dbReference type="PROSITE-ProRule" id="PRU00028"/>
    </source>
</evidence>
<evidence type="ECO:0000305" key="4"/>
<protein>
    <recommendedName>
        <fullName>Gamma-crystallin S</fullName>
    </recommendedName>
    <alternativeName>
        <fullName>Beta-crystallin S</fullName>
    </alternativeName>
    <alternativeName>
        <fullName>Gamma-S-crystallin</fullName>
    </alternativeName>
</protein>
<feature type="initiator methionine" description="Removed" evidence="2">
    <location>
        <position position="1"/>
    </location>
</feature>
<feature type="chain" id="PRO_0000289612" description="Gamma-crystallin S">
    <location>
        <begin position="2"/>
        <end position="179"/>
    </location>
</feature>
<feature type="domain" description="Beta/gamma crystallin 'Greek key' 1" evidence="3">
    <location>
        <begin position="6"/>
        <end position="44"/>
    </location>
</feature>
<feature type="domain" description="Beta/gamma crystallin 'Greek key' 2" evidence="3">
    <location>
        <begin position="45"/>
        <end position="87"/>
    </location>
</feature>
<feature type="domain" description="Beta/gamma crystallin 'Greek key' 3" evidence="3">
    <location>
        <begin position="94"/>
        <end position="134"/>
    </location>
</feature>
<feature type="domain" description="Beta/gamma crystallin 'Greek key' 4" evidence="3">
    <location>
        <begin position="135"/>
        <end position="177"/>
    </location>
</feature>
<feature type="region of interest" description="N-terminal arm">
    <location>
        <begin position="2"/>
        <end position="5"/>
    </location>
</feature>
<feature type="region of interest" description="Connecting peptide">
    <location>
        <begin position="88"/>
        <end position="93"/>
    </location>
</feature>
<feature type="modified residue" description="N-acetylserine" evidence="2">
    <location>
        <position position="2"/>
    </location>
</feature>
<organism>
    <name type="scientific">Oryctolagus cuniculus</name>
    <name type="common">Rabbit</name>
    <dbReference type="NCBI Taxonomy" id="9986"/>
    <lineage>
        <taxon>Eukaryota</taxon>
        <taxon>Metazoa</taxon>
        <taxon>Chordata</taxon>
        <taxon>Craniata</taxon>
        <taxon>Vertebrata</taxon>
        <taxon>Euteleostomi</taxon>
        <taxon>Mammalia</taxon>
        <taxon>Eutheria</taxon>
        <taxon>Euarchontoglires</taxon>
        <taxon>Glires</taxon>
        <taxon>Lagomorpha</taxon>
        <taxon>Leporidae</taxon>
        <taxon>Oryctolagus</taxon>
    </lineage>
</organism>
<keyword id="KW-0007">Acetylation</keyword>
<keyword id="KW-0273">Eye lens protein</keyword>
<keyword id="KW-1185">Reference proteome</keyword>
<keyword id="KW-0677">Repeat</keyword>
<reference key="1">
    <citation type="submission" date="2007-02" db="EMBL/GenBank/DDBJ databases">
        <authorList>
            <person name="Wistow G."/>
        </authorList>
    </citation>
    <scope>NUCLEOTIDE SEQUENCE [MRNA]</scope>
    <source>
        <tissue>Lens</tissue>
    </source>
</reference>
<gene>
    <name type="primary">CRYGS</name>
</gene>
<proteinExistence type="evidence at transcript level"/>
<sequence length="179" mass="21128">MSKTGTKITFYEDKNFQGRRYDCDCDCSDFHTYLSRCNSIRVEGGTWAVYERPDFAGYMYILPQGDYPEYQRWMGLNDRLSSCRALHLSSGGQYKIQIFEKGDFNGQMYETTEDCPSIMEQFHMREIHSCKVLDGAWIFYELPNYRGRQYLLDKKEYRKPVDWGAVSPAVQSFRRIVES</sequence>
<dbReference type="EMBL" id="EF457885">
    <property type="protein sequence ID" value="ABO41861.1"/>
    <property type="molecule type" value="mRNA"/>
</dbReference>
<dbReference type="RefSeq" id="NP_001093430.1">
    <property type="nucleotide sequence ID" value="NM_001099960.1"/>
</dbReference>
<dbReference type="SMR" id="A4L9I8"/>
<dbReference type="FunCoup" id="A4L9I8">
    <property type="interactions" value="9"/>
</dbReference>
<dbReference type="STRING" id="9986.ENSOCUP00000049169"/>
<dbReference type="PaxDb" id="9986-ENSOCUP00000015684"/>
<dbReference type="Ensembl" id="ENSOCUT00000028758.1">
    <property type="protein sequence ID" value="ENSOCUP00000015684.1"/>
    <property type="gene ID" value="ENSOCUG00000022375.2"/>
</dbReference>
<dbReference type="GeneID" id="100101573"/>
<dbReference type="KEGG" id="ocu:100101573"/>
<dbReference type="CTD" id="1427"/>
<dbReference type="eggNOG" id="ENOG502QQAM">
    <property type="taxonomic scope" value="Eukaryota"/>
</dbReference>
<dbReference type="GeneTree" id="ENSGT00940000160342"/>
<dbReference type="HOGENOM" id="CLU_081883_1_1_1"/>
<dbReference type="InParanoid" id="A4L9I8"/>
<dbReference type="OMA" id="MEQFHIR"/>
<dbReference type="OrthoDB" id="8407241at2759"/>
<dbReference type="Proteomes" id="UP000001811">
    <property type="component" value="Chromosome 14"/>
</dbReference>
<dbReference type="Bgee" id="ENSOCUG00000022375">
    <property type="expression patterns" value="Expressed in embryo and 3 other cell types or tissues"/>
</dbReference>
<dbReference type="GO" id="GO:0005212">
    <property type="term" value="F:structural constituent of eye lens"/>
    <property type="evidence" value="ECO:0007669"/>
    <property type="project" value="UniProtKB-KW"/>
</dbReference>
<dbReference type="GO" id="GO:0002088">
    <property type="term" value="P:lens development in camera-type eye"/>
    <property type="evidence" value="ECO:0007669"/>
    <property type="project" value="TreeGrafter"/>
</dbReference>
<dbReference type="GO" id="GO:0007601">
    <property type="term" value="P:visual perception"/>
    <property type="evidence" value="ECO:0007669"/>
    <property type="project" value="TreeGrafter"/>
</dbReference>
<dbReference type="FunFam" id="2.60.20.10:FF:000001">
    <property type="entry name" value="Crystallin gamma S"/>
    <property type="match status" value="1"/>
</dbReference>
<dbReference type="FunFam" id="2.60.20.10:FF:000003">
    <property type="entry name" value="Crystallin gamma S"/>
    <property type="match status" value="1"/>
</dbReference>
<dbReference type="Gene3D" id="2.60.20.10">
    <property type="entry name" value="Crystallins"/>
    <property type="match status" value="2"/>
</dbReference>
<dbReference type="InterPro" id="IPR050252">
    <property type="entry name" value="Beta/Gamma-Crystallin"/>
</dbReference>
<dbReference type="InterPro" id="IPR001064">
    <property type="entry name" value="Beta/gamma_crystallin"/>
</dbReference>
<dbReference type="InterPro" id="IPR011024">
    <property type="entry name" value="G_crystallin-like"/>
</dbReference>
<dbReference type="PANTHER" id="PTHR11818">
    <property type="entry name" value="BETA/GAMMA CRYSTALLIN"/>
    <property type="match status" value="1"/>
</dbReference>
<dbReference type="PANTHER" id="PTHR11818:SF6">
    <property type="entry name" value="GAMMA-CRYSTALLIN S"/>
    <property type="match status" value="1"/>
</dbReference>
<dbReference type="Pfam" id="PF00030">
    <property type="entry name" value="Crystall"/>
    <property type="match status" value="2"/>
</dbReference>
<dbReference type="PRINTS" id="PR01367">
    <property type="entry name" value="BGCRYSTALLIN"/>
</dbReference>
<dbReference type="SMART" id="SM00247">
    <property type="entry name" value="XTALbg"/>
    <property type="match status" value="2"/>
</dbReference>
<dbReference type="SUPFAM" id="SSF49695">
    <property type="entry name" value="gamma-Crystallin-like"/>
    <property type="match status" value="1"/>
</dbReference>
<dbReference type="PROSITE" id="PS50915">
    <property type="entry name" value="CRYSTALLIN_BETA_GAMMA"/>
    <property type="match status" value="4"/>
</dbReference>